<protein>
    <recommendedName>
        <fullName>Protein VraC</fullName>
    </recommendedName>
</protein>
<sequence length="126" mass="14999">MRYSLKSGANETREFKFHSEDVRIYCSVIGKEYDGTVPPLMCAKLWPKFKMFQIFKGEAIRLVRTNVELFENLESDIQYCAYLTHKKSEKVKQFDRFIFKLEINKNNKTRMIIEQTFISEDGIYGF</sequence>
<gene>
    <name type="ordered locus">SH2416</name>
</gene>
<accession>Q4L3Q2</accession>
<feature type="chain" id="PRO_0000065919" description="Protein VraC">
    <location>
        <begin position="1"/>
        <end position="126"/>
    </location>
</feature>
<proteinExistence type="predicted"/>
<organism>
    <name type="scientific">Staphylococcus haemolyticus (strain JCSC1435)</name>
    <dbReference type="NCBI Taxonomy" id="279808"/>
    <lineage>
        <taxon>Bacteria</taxon>
        <taxon>Bacillati</taxon>
        <taxon>Bacillota</taxon>
        <taxon>Bacilli</taxon>
        <taxon>Bacillales</taxon>
        <taxon>Staphylococcaceae</taxon>
        <taxon>Staphylococcus</taxon>
    </lineage>
</organism>
<name>VRAC_STAHJ</name>
<reference key="1">
    <citation type="journal article" date="2005" name="J. Bacteriol.">
        <title>Whole-genome sequencing of Staphylococcus haemolyticus uncovers the extreme plasticity of its genome and the evolution of human-colonizing staphylococcal species.</title>
        <authorList>
            <person name="Takeuchi F."/>
            <person name="Watanabe S."/>
            <person name="Baba T."/>
            <person name="Yuzawa H."/>
            <person name="Ito T."/>
            <person name="Morimoto Y."/>
            <person name="Kuroda M."/>
            <person name="Cui L."/>
            <person name="Takahashi M."/>
            <person name="Ankai A."/>
            <person name="Baba S."/>
            <person name="Fukui S."/>
            <person name="Lee J.C."/>
            <person name="Hiramatsu K."/>
        </authorList>
    </citation>
    <scope>NUCLEOTIDE SEQUENCE [LARGE SCALE GENOMIC DNA]</scope>
    <source>
        <strain>JCSC1435</strain>
    </source>
</reference>
<dbReference type="EMBL" id="AP006716">
    <property type="protein sequence ID" value="BAE05725.1"/>
    <property type="molecule type" value="Genomic_DNA"/>
</dbReference>
<dbReference type="RefSeq" id="WP_011276671.1">
    <property type="nucleotide sequence ID" value="NC_007168.1"/>
</dbReference>
<dbReference type="SMR" id="Q4L3Q2"/>
<dbReference type="GeneID" id="93781638"/>
<dbReference type="KEGG" id="sha:SH2416"/>
<dbReference type="eggNOG" id="ENOG5030EW4">
    <property type="taxonomic scope" value="Bacteria"/>
</dbReference>
<dbReference type="HOGENOM" id="CLU_2195295_0_0_9"/>
<dbReference type="OrthoDB" id="2407806at2"/>
<dbReference type="Proteomes" id="UP000000543">
    <property type="component" value="Chromosome"/>
</dbReference>
<dbReference type="InterPro" id="IPR016994">
    <property type="entry name" value="UCP032370_VraC"/>
</dbReference>
<dbReference type="PIRSF" id="PIRSF032370">
    <property type="entry name" value="UCP032370_VraC"/>
    <property type="match status" value="1"/>
</dbReference>